<comment type="function">
    <text evidence="1">Part of the tripartite efflux system MdtEF-TolC, which confers resistance to various compounds.</text>
</comment>
<comment type="subunit">
    <text evidence="1">Homotrimer. Part of the tripartite efflux system MdtEF-TolC, which is composed of an inner membrane transporter, MdtF, a membrane fusion protein, MdtE, and an outer membrane component, TolC. The complex forms a large protein conduit and can translocate molecules across both the inner and outer membranes (By similarity).</text>
</comment>
<comment type="subcellular location">
    <subcellularLocation>
        <location evidence="1">Cell inner membrane</location>
        <topology evidence="1">Multi-pass membrane protein</topology>
    </subcellularLocation>
</comment>
<comment type="similarity">
    <text evidence="3">Belongs to the resistance-nodulation-cell division (RND) (TC 2.A.6) family.</text>
</comment>
<gene>
    <name type="primary">mdtF</name>
    <name type="ordered locus">c4325</name>
</gene>
<protein>
    <recommendedName>
        <fullName>Multidrug resistance protein MdtF</fullName>
    </recommendedName>
</protein>
<name>MDTF_ECOL6</name>
<organism>
    <name type="scientific">Escherichia coli O6:H1 (strain CFT073 / ATCC 700928 / UPEC)</name>
    <dbReference type="NCBI Taxonomy" id="199310"/>
    <lineage>
        <taxon>Bacteria</taxon>
        <taxon>Pseudomonadati</taxon>
        <taxon>Pseudomonadota</taxon>
        <taxon>Gammaproteobacteria</taxon>
        <taxon>Enterobacterales</taxon>
        <taxon>Enterobacteriaceae</taxon>
        <taxon>Escherichia</taxon>
    </lineage>
</organism>
<accession>Q8FCI8</accession>
<evidence type="ECO:0000250" key="1"/>
<evidence type="ECO:0000255" key="2"/>
<evidence type="ECO:0000305" key="3"/>
<keyword id="KW-0046">Antibiotic resistance</keyword>
<keyword id="KW-0997">Cell inner membrane</keyword>
<keyword id="KW-1003">Cell membrane</keyword>
<keyword id="KW-0472">Membrane</keyword>
<keyword id="KW-1185">Reference proteome</keyword>
<keyword id="KW-0812">Transmembrane</keyword>
<keyword id="KW-1133">Transmembrane helix</keyword>
<keyword id="KW-0813">Transport</keyword>
<proteinExistence type="inferred from homology"/>
<feature type="chain" id="PRO_0000161842" description="Multidrug resistance protein MdtF">
    <location>
        <begin position="1"/>
        <end position="1037"/>
    </location>
</feature>
<feature type="topological domain" description="Cytoplasmic" evidence="2">
    <location>
        <begin position="1"/>
        <end position="9"/>
    </location>
</feature>
<feature type="transmembrane region" description="Helical" evidence="2">
    <location>
        <begin position="10"/>
        <end position="30"/>
    </location>
</feature>
<feature type="topological domain" description="Periplasmic" evidence="2">
    <location>
        <begin position="31"/>
        <end position="338"/>
    </location>
</feature>
<feature type="transmembrane region" description="Helical" evidence="2">
    <location>
        <begin position="339"/>
        <end position="359"/>
    </location>
</feature>
<feature type="topological domain" description="Cytoplasmic" evidence="2">
    <location>
        <begin position="360"/>
        <end position="369"/>
    </location>
</feature>
<feature type="transmembrane region" description="Helical" evidence="2">
    <location>
        <begin position="370"/>
        <end position="390"/>
    </location>
</feature>
<feature type="topological domain" description="Periplasmic" evidence="2">
    <location>
        <begin position="391"/>
        <end position="392"/>
    </location>
</feature>
<feature type="transmembrane region" description="Helical" evidence="2">
    <location>
        <begin position="393"/>
        <end position="413"/>
    </location>
</feature>
<feature type="topological domain" description="Cytoplasmic" evidence="2">
    <location>
        <begin position="414"/>
        <end position="440"/>
    </location>
</feature>
<feature type="transmembrane region" description="Helical" evidence="2">
    <location>
        <begin position="441"/>
        <end position="461"/>
    </location>
</feature>
<feature type="topological domain" description="Periplasmic" evidence="2">
    <location>
        <begin position="462"/>
        <end position="471"/>
    </location>
</feature>
<feature type="transmembrane region" description="Helical" evidence="2">
    <location>
        <begin position="472"/>
        <end position="492"/>
    </location>
</feature>
<feature type="topological domain" description="Cytoplasmic" evidence="2">
    <location>
        <begin position="493"/>
        <end position="534"/>
    </location>
</feature>
<feature type="transmembrane region" description="Helical" evidence="2">
    <location>
        <begin position="535"/>
        <end position="555"/>
    </location>
</feature>
<feature type="topological domain" description="Periplasmic" evidence="2">
    <location>
        <begin position="556"/>
        <end position="870"/>
    </location>
</feature>
<feature type="transmembrane region" description="Helical" evidence="2">
    <location>
        <begin position="871"/>
        <end position="891"/>
    </location>
</feature>
<feature type="topological domain" description="Cytoplasmic" evidence="2">
    <location>
        <position position="892"/>
    </location>
</feature>
<feature type="transmembrane region" description="Helical" evidence="2">
    <location>
        <begin position="893"/>
        <end position="913"/>
    </location>
</feature>
<feature type="topological domain" description="Periplasmic" evidence="2">
    <location>
        <begin position="914"/>
        <end position="927"/>
    </location>
</feature>
<feature type="transmembrane region" description="Helical" evidence="2">
    <location>
        <begin position="928"/>
        <end position="948"/>
    </location>
</feature>
<feature type="topological domain" description="Cytoplasmic" evidence="2">
    <location>
        <begin position="949"/>
        <end position="972"/>
    </location>
</feature>
<feature type="transmembrane region" description="Helical" evidence="2">
    <location>
        <begin position="973"/>
        <end position="993"/>
    </location>
</feature>
<feature type="topological domain" description="Periplasmic" evidence="2">
    <location>
        <begin position="994"/>
        <end position="1006"/>
    </location>
</feature>
<feature type="transmembrane region" description="Helical" evidence="2">
    <location>
        <begin position="1007"/>
        <end position="1027"/>
    </location>
</feature>
<feature type="topological domain" description="Cytoplasmic" evidence="2">
    <location>
        <begin position="1028"/>
        <end position="1037"/>
    </location>
</feature>
<reference key="1">
    <citation type="journal article" date="2002" name="Proc. Natl. Acad. Sci. U.S.A.">
        <title>Extensive mosaic structure revealed by the complete genome sequence of uropathogenic Escherichia coli.</title>
        <authorList>
            <person name="Welch R.A."/>
            <person name="Burland V."/>
            <person name="Plunkett G. III"/>
            <person name="Redford P."/>
            <person name="Roesch P."/>
            <person name="Rasko D."/>
            <person name="Buckles E.L."/>
            <person name="Liou S.-R."/>
            <person name="Boutin A."/>
            <person name="Hackett J."/>
            <person name="Stroud D."/>
            <person name="Mayhew G.F."/>
            <person name="Rose D.J."/>
            <person name="Zhou S."/>
            <person name="Schwartz D.C."/>
            <person name="Perna N.T."/>
            <person name="Mobley H.L.T."/>
            <person name="Donnenberg M.S."/>
            <person name="Blattner F.R."/>
        </authorList>
    </citation>
    <scope>NUCLEOTIDE SEQUENCE [LARGE SCALE GENOMIC DNA]</scope>
    <source>
        <strain>CFT073 / ATCC 700928 / UPEC</strain>
    </source>
</reference>
<sequence>MANYFIDRPVFAWVLAIIMMLAGGLAIMNLPVAQYPQIAPPTITVSATYPGADAQTVEDSVTQVIEQNMNGLDGLMYMSSTSDAAGNASITLTFETGTSPDIAQVQVQNKLQLAMPSLPEAVQQQGISVDKSSSNILMVAAFISDNGSLNQYDIADYVASNIKDPLSRTAGVGSVQLFGSEYAMRIWLDPQKLNKYNLVPSDVISQIKVQNNQISGGQLGGMPQAADQQLNASIIVQTRLQTPEEFGKILLKVQQDGSQVLLRDVARVELGAEDYSTVARYNGKPAAGIAIKLATGANALDTSRAVKEELNRLSAYFPASLKTVYPYDTTPFIKISIQEVFKTLVEAIILVFLVMYLFLQNFRATIIPTIAVPVVILGTFAILSAVGFTINTLTMFGMVLAIGLLVDDAIVVVENVERVIAEDKLPPKEATHKSMGQIQRALVGIAVVLSAVFMPMAFMSGATGEIYRQFSITLISSMLLSVFVAMSLTPALCATILKAAPEGGHKPNALFARFNTLFEKSTQHYTDSTRSLLRCTGRYMVVYLLICAGMAVLFLRTPTSFLPEEDQGVFMTTAQLPSGATMVNTTKVLQQVTDYYLTKEKNNVQSVFTVGGFGFSGQGQNNGLAFISLKPWSERVGEENSVTAIIQRAMIALSSINKAVVFPFNLPAVAELGTASGFDMELLDNGNLGHEKLTQARNELLSLAAQSPNQVIGVRPNGLEDTPMFKVNVNAAKAEAMGVALSDINQTISTAFGSSYVNDFLNQGRVKKVYVQAGTPFRMLPDNINQWYVRNASGTMAPLSAYSSTEWTYGSPRLERYNGIPSMEILGEAAAGKSTGDAMKFMADLVAKLPAGVGYSWTGLSYQEALSSNQAPALYAISLVVVFLALAALYESWSIPFSVMLVVPLGVVGALLATDLRGLSNDVYFQVGLLTTIGLSAKNAILIVEFAVEMMQKEGKTPVEAIIEAARMRLRPILMTSLAFILGVLPLVISHGAGSGAQNAVGTGVMGGMFAATVLAIYFVPVFFVVVEHLFARFKKA</sequence>
<dbReference type="EMBL" id="AE014075">
    <property type="protein sequence ID" value="AAN82761.1"/>
    <property type="molecule type" value="Genomic_DNA"/>
</dbReference>
<dbReference type="RefSeq" id="WP_000024904.1">
    <property type="nucleotide sequence ID" value="NZ_CP051263.1"/>
</dbReference>
<dbReference type="SMR" id="Q8FCI8"/>
<dbReference type="STRING" id="199310.c4325"/>
<dbReference type="KEGG" id="ecc:c4325"/>
<dbReference type="eggNOG" id="COG0841">
    <property type="taxonomic scope" value="Bacteria"/>
</dbReference>
<dbReference type="HOGENOM" id="CLU_002755_0_1_6"/>
<dbReference type="BioCyc" id="ECOL199310:C4325-MONOMER"/>
<dbReference type="Proteomes" id="UP000001410">
    <property type="component" value="Chromosome"/>
</dbReference>
<dbReference type="GO" id="GO:0005886">
    <property type="term" value="C:plasma membrane"/>
    <property type="evidence" value="ECO:0007669"/>
    <property type="project" value="UniProtKB-SubCell"/>
</dbReference>
<dbReference type="GO" id="GO:0015562">
    <property type="term" value="F:efflux transmembrane transporter activity"/>
    <property type="evidence" value="ECO:0007669"/>
    <property type="project" value="InterPro"/>
</dbReference>
<dbReference type="GO" id="GO:0042910">
    <property type="term" value="F:xenobiotic transmembrane transporter activity"/>
    <property type="evidence" value="ECO:0007669"/>
    <property type="project" value="TreeGrafter"/>
</dbReference>
<dbReference type="GO" id="GO:0046677">
    <property type="term" value="P:response to antibiotic"/>
    <property type="evidence" value="ECO:0007669"/>
    <property type="project" value="UniProtKB-KW"/>
</dbReference>
<dbReference type="FunFam" id="1.20.1640.10:FF:000001">
    <property type="entry name" value="Efflux pump membrane transporter"/>
    <property type="match status" value="1"/>
</dbReference>
<dbReference type="FunFam" id="1.20.1640.10:FF:000002">
    <property type="entry name" value="Efflux pump membrane transporter"/>
    <property type="match status" value="1"/>
</dbReference>
<dbReference type="FunFam" id="3.30.2090.10:FF:000001">
    <property type="entry name" value="Efflux pump membrane transporter"/>
    <property type="match status" value="1"/>
</dbReference>
<dbReference type="FunFam" id="3.30.2090.10:FF:000002">
    <property type="entry name" value="Efflux pump membrane transporter"/>
    <property type="match status" value="1"/>
</dbReference>
<dbReference type="FunFam" id="3.30.70.1430:FF:000001">
    <property type="entry name" value="Efflux pump membrane transporter"/>
    <property type="match status" value="1"/>
</dbReference>
<dbReference type="FunFam" id="3.30.70.1430:FF:000002">
    <property type="entry name" value="Efflux pump membrane transporter"/>
    <property type="match status" value="1"/>
</dbReference>
<dbReference type="Gene3D" id="3.30.70.1430">
    <property type="entry name" value="Multidrug efflux transporter AcrB pore domain"/>
    <property type="match status" value="2"/>
</dbReference>
<dbReference type="Gene3D" id="3.30.70.1440">
    <property type="entry name" value="Multidrug efflux transporter AcrB pore domain"/>
    <property type="match status" value="1"/>
</dbReference>
<dbReference type="Gene3D" id="3.30.70.1320">
    <property type="entry name" value="Multidrug efflux transporter AcrB pore domain like"/>
    <property type="match status" value="1"/>
</dbReference>
<dbReference type="Gene3D" id="3.30.2090.10">
    <property type="entry name" value="Multidrug efflux transporter AcrB TolC docking domain, DN and DC subdomains"/>
    <property type="match status" value="2"/>
</dbReference>
<dbReference type="Gene3D" id="1.20.1640.10">
    <property type="entry name" value="Multidrug efflux transporter AcrB transmembrane domain"/>
    <property type="match status" value="2"/>
</dbReference>
<dbReference type="InterPro" id="IPR027463">
    <property type="entry name" value="AcrB_DN_DC_subdom"/>
</dbReference>
<dbReference type="InterPro" id="IPR001036">
    <property type="entry name" value="Acrflvin-R"/>
</dbReference>
<dbReference type="InterPro" id="IPR004764">
    <property type="entry name" value="MdtF-like"/>
</dbReference>
<dbReference type="NCBIfam" id="TIGR00915">
    <property type="entry name" value="2A0602"/>
    <property type="match status" value="1"/>
</dbReference>
<dbReference type="NCBIfam" id="NF000282">
    <property type="entry name" value="RND_permease_1"/>
    <property type="match status" value="1"/>
</dbReference>
<dbReference type="PANTHER" id="PTHR32063">
    <property type="match status" value="1"/>
</dbReference>
<dbReference type="PANTHER" id="PTHR32063:SF13">
    <property type="entry name" value="MULTIDRUG EFFLUX PUMP SUBUNIT ACRB-RELATED"/>
    <property type="match status" value="1"/>
</dbReference>
<dbReference type="Pfam" id="PF00873">
    <property type="entry name" value="ACR_tran"/>
    <property type="match status" value="1"/>
</dbReference>
<dbReference type="PRINTS" id="PR00702">
    <property type="entry name" value="ACRIFLAVINRP"/>
</dbReference>
<dbReference type="SUPFAM" id="SSF82693">
    <property type="entry name" value="Multidrug efflux transporter AcrB pore domain, PN1, PN2, PC1 and PC2 subdomains"/>
    <property type="match status" value="4"/>
</dbReference>
<dbReference type="SUPFAM" id="SSF82714">
    <property type="entry name" value="Multidrug efflux transporter AcrB TolC docking domain, DN and DC subdomains"/>
    <property type="match status" value="2"/>
</dbReference>
<dbReference type="SUPFAM" id="SSF82866">
    <property type="entry name" value="Multidrug efflux transporter AcrB transmembrane domain"/>
    <property type="match status" value="2"/>
</dbReference>